<proteinExistence type="inferred from homology"/>
<accession>B7L273</accession>
<protein>
    <recommendedName>
        <fullName evidence="1">Probable transcriptional regulatory protein Mchl_0946</fullName>
    </recommendedName>
</protein>
<comment type="subcellular location">
    <subcellularLocation>
        <location evidence="1">Cytoplasm</location>
    </subcellularLocation>
</comment>
<comment type="similarity">
    <text evidence="1">Belongs to the TACO1 family.</text>
</comment>
<keyword id="KW-0963">Cytoplasm</keyword>
<keyword id="KW-0238">DNA-binding</keyword>
<keyword id="KW-0804">Transcription</keyword>
<keyword id="KW-0805">Transcription regulation</keyword>
<sequence length="248" mass="26776">MAGHSQFKNIMHRKGRVDAVRSKVFSKLAREITVAAKLGTPDPSMNPRLRAAILAARAENMPKDNIERAIKKAVGGDGENYEEIRYEGYGPGGAALIVEAQTDNRNRTASDVRSAFTKSGGSLAETGAVAFMFDRVGVIAFAPDVADADTMLEAAIEAGADDVRSDTEGHEVICAQDAYGDVSKALEGRFGEPRRTGLIWKAQNTIDVDDETGEKLIRLVEVIEDQDDVQNVYVNFALSEALVEKMGA</sequence>
<name>Y946_METC4</name>
<dbReference type="EMBL" id="CP001298">
    <property type="protein sequence ID" value="ACK81863.1"/>
    <property type="molecule type" value="Genomic_DNA"/>
</dbReference>
<dbReference type="RefSeq" id="WP_003599921.1">
    <property type="nucleotide sequence ID" value="NC_011757.1"/>
</dbReference>
<dbReference type="SMR" id="B7L273"/>
<dbReference type="KEGG" id="mch:Mchl_0946"/>
<dbReference type="HOGENOM" id="CLU_062974_2_2_5"/>
<dbReference type="Proteomes" id="UP000002385">
    <property type="component" value="Chromosome"/>
</dbReference>
<dbReference type="GO" id="GO:0005829">
    <property type="term" value="C:cytosol"/>
    <property type="evidence" value="ECO:0007669"/>
    <property type="project" value="TreeGrafter"/>
</dbReference>
<dbReference type="GO" id="GO:0003677">
    <property type="term" value="F:DNA binding"/>
    <property type="evidence" value="ECO:0007669"/>
    <property type="project" value="UniProtKB-UniRule"/>
</dbReference>
<dbReference type="GO" id="GO:0006355">
    <property type="term" value="P:regulation of DNA-templated transcription"/>
    <property type="evidence" value="ECO:0007669"/>
    <property type="project" value="UniProtKB-UniRule"/>
</dbReference>
<dbReference type="FunFam" id="1.10.10.200:FF:000002">
    <property type="entry name" value="Probable transcriptional regulatory protein CLM62_37755"/>
    <property type="match status" value="1"/>
</dbReference>
<dbReference type="Gene3D" id="1.10.10.200">
    <property type="match status" value="1"/>
</dbReference>
<dbReference type="Gene3D" id="3.30.70.980">
    <property type="match status" value="2"/>
</dbReference>
<dbReference type="HAMAP" id="MF_00693">
    <property type="entry name" value="Transcrip_reg_TACO1"/>
    <property type="match status" value="1"/>
</dbReference>
<dbReference type="InterPro" id="IPR017856">
    <property type="entry name" value="Integrase-like_N"/>
</dbReference>
<dbReference type="InterPro" id="IPR048300">
    <property type="entry name" value="TACO1_YebC-like_2nd/3rd_dom"/>
</dbReference>
<dbReference type="InterPro" id="IPR049083">
    <property type="entry name" value="TACO1_YebC_N"/>
</dbReference>
<dbReference type="InterPro" id="IPR002876">
    <property type="entry name" value="Transcrip_reg_TACO1-like"/>
</dbReference>
<dbReference type="InterPro" id="IPR026564">
    <property type="entry name" value="Transcrip_reg_TACO1-like_dom3"/>
</dbReference>
<dbReference type="InterPro" id="IPR029072">
    <property type="entry name" value="YebC-like"/>
</dbReference>
<dbReference type="NCBIfam" id="NF001030">
    <property type="entry name" value="PRK00110.1"/>
    <property type="match status" value="1"/>
</dbReference>
<dbReference type="NCBIfam" id="NF009044">
    <property type="entry name" value="PRK12378.1"/>
    <property type="match status" value="1"/>
</dbReference>
<dbReference type="NCBIfam" id="TIGR01033">
    <property type="entry name" value="YebC/PmpR family DNA-binding transcriptional regulator"/>
    <property type="match status" value="1"/>
</dbReference>
<dbReference type="PANTHER" id="PTHR12532:SF6">
    <property type="entry name" value="TRANSCRIPTIONAL REGULATORY PROTEIN YEBC-RELATED"/>
    <property type="match status" value="1"/>
</dbReference>
<dbReference type="PANTHER" id="PTHR12532">
    <property type="entry name" value="TRANSLATIONAL ACTIVATOR OF CYTOCHROME C OXIDASE 1"/>
    <property type="match status" value="1"/>
</dbReference>
<dbReference type="Pfam" id="PF20772">
    <property type="entry name" value="TACO1_YebC_N"/>
    <property type="match status" value="1"/>
</dbReference>
<dbReference type="Pfam" id="PF01709">
    <property type="entry name" value="Transcrip_reg"/>
    <property type="match status" value="1"/>
</dbReference>
<dbReference type="SUPFAM" id="SSF75625">
    <property type="entry name" value="YebC-like"/>
    <property type="match status" value="1"/>
</dbReference>
<gene>
    <name type="ordered locus">Mchl_0946</name>
</gene>
<feature type="chain" id="PRO_1000200099" description="Probable transcriptional regulatory protein Mchl_0946">
    <location>
        <begin position="1"/>
        <end position="248"/>
    </location>
</feature>
<reference key="1">
    <citation type="submission" date="2008-12" db="EMBL/GenBank/DDBJ databases">
        <title>Complete sequence of chromosome of Methylobacterium chloromethanicum CM4.</title>
        <authorList>
            <consortium name="US DOE Joint Genome Institute"/>
            <person name="Lucas S."/>
            <person name="Copeland A."/>
            <person name="Lapidus A."/>
            <person name="Glavina del Rio T."/>
            <person name="Dalin E."/>
            <person name="Tice H."/>
            <person name="Bruce D."/>
            <person name="Goodwin L."/>
            <person name="Pitluck S."/>
            <person name="Chertkov O."/>
            <person name="Brettin T."/>
            <person name="Detter J.C."/>
            <person name="Han C."/>
            <person name="Larimer F."/>
            <person name="Land M."/>
            <person name="Hauser L."/>
            <person name="Kyrpides N."/>
            <person name="Mikhailova N."/>
            <person name="Marx C."/>
            <person name="Richardson P."/>
        </authorList>
    </citation>
    <scope>NUCLEOTIDE SEQUENCE [LARGE SCALE GENOMIC DNA]</scope>
    <source>
        <strain>CM4 / NCIMB 13688</strain>
    </source>
</reference>
<organism>
    <name type="scientific">Methylorubrum extorquens (strain CM4 / NCIMB 13688)</name>
    <name type="common">Methylobacterium extorquens</name>
    <dbReference type="NCBI Taxonomy" id="440085"/>
    <lineage>
        <taxon>Bacteria</taxon>
        <taxon>Pseudomonadati</taxon>
        <taxon>Pseudomonadota</taxon>
        <taxon>Alphaproteobacteria</taxon>
        <taxon>Hyphomicrobiales</taxon>
        <taxon>Methylobacteriaceae</taxon>
        <taxon>Methylorubrum</taxon>
    </lineage>
</organism>
<evidence type="ECO:0000255" key="1">
    <source>
        <dbReference type="HAMAP-Rule" id="MF_00693"/>
    </source>
</evidence>